<sequence length="479" mass="52813">MRVLHVCSELFPLLKTGGLADVAGALPGAQIAAGMDVRVILPAFPDLKKGIANLQVVRELDTFAGHVTLLFGHFNGVGIYLIDVPELYERAGSPYHDPALYAYADNYLRFALLGWMGCEMACGLDHYWRPDIVHAHDWHAGLTCAYLAARNRPAKSIFTVHNLAYQGLFDARHMPDLHLPREFFQVYGLEFYGQISYLKAGLYYADHITTVSPTYAHEITLPAYGYGMEGLLKSREEEGRLSGILNGVDEMIWNPAHDPLLASHYSRDTLANKAENKRRLQTAMGLKVDDKVPVFAIVSRLTSQKGLDIALSAIPDLLEQGGQVVVLGAGDADLQEGFLAAAAEYHGQVGVQIGYHEAFSHRIIGGADVIMVPSRFEPCGLTQLYGLKYGTLPLVRRTGGLADTVSDCSLENLADGLASGFVFNDCSVGSLSRAIRRVFVLWSRPTLWRYVQRQAMAMDFGWQVAAQAYGALYQRLYTH</sequence>
<proteinExistence type="inferred from homology"/>
<comment type="function">
    <text evidence="1">Synthesizes alpha-1,4-glucan chains using ADP-glucose.</text>
</comment>
<comment type="catalytic activity">
    <reaction evidence="1">
        <text>[(1-&gt;4)-alpha-D-glucosyl](n) + ADP-alpha-D-glucose = [(1-&gt;4)-alpha-D-glucosyl](n+1) + ADP + H(+)</text>
        <dbReference type="Rhea" id="RHEA:18189"/>
        <dbReference type="Rhea" id="RHEA-COMP:9584"/>
        <dbReference type="Rhea" id="RHEA-COMP:9587"/>
        <dbReference type="ChEBI" id="CHEBI:15378"/>
        <dbReference type="ChEBI" id="CHEBI:15444"/>
        <dbReference type="ChEBI" id="CHEBI:57498"/>
        <dbReference type="ChEBI" id="CHEBI:456216"/>
        <dbReference type="EC" id="2.4.1.21"/>
    </reaction>
</comment>
<comment type="pathway">
    <text evidence="1">Glycan biosynthesis; glycogen biosynthesis.</text>
</comment>
<comment type="similarity">
    <text evidence="1">Belongs to the glycosyltransferase 1 family. Bacterial/plant glycogen synthase subfamily.</text>
</comment>
<dbReference type="EC" id="2.4.1.21" evidence="1"/>
<dbReference type="EMBL" id="CP001657">
    <property type="protein sequence ID" value="ACT14949.1"/>
    <property type="molecule type" value="Genomic_DNA"/>
</dbReference>
<dbReference type="RefSeq" id="WP_015842030.1">
    <property type="nucleotide sequence ID" value="NC_012917.1"/>
</dbReference>
<dbReference type="SMR" id="C6DH76"/>
<dbReference type="STRING" id="561230.PC1_3934"/>
<dbReference type="CAZy" id="GT5">
    <property type="family name" value="Glycosyltransferase Family 5"/>
</dbReference>
<dbReference type="KEGG" id="pct:PC1_3934"/>
<dbReference type="eggNOG" id="COG0297">
    <property type="taxonomic scope" value="Bacteria"/>
</dbReference>
<dbReference type="HOGENOM" id="CLU_009583_18_2_6"/>
<dbReference type="OrthoDB" id="9808590at2"/>
<dbReference type="UniPathway" id="UPA00164"/>
<dbReference type="Proteomes" id="UP000002736">
    <property type="component" value="Chromosome"/>
</dbReference>
<dbReference type="GO" id="GO:0005829">
    <property type="term" value="C:cytosol"/>
    <property type="evidence" value="ECO:0007669"/>
    <property type="project" value="TreeGrafter"/>
</dbReference>
<dbReference type="GO" id="GO:0009011">
    <property type="term" value="F:alpha-1,4-glucan glucosyltransferase (ADP-glucose donor) activity"/>
    <property type="evidence" value="ECO:0007669"/>
    <property type="project" value="UniProtKB-UniRule"/>
</dbReference>
<dbReference type="GO" id="GO:0004373">
    <property type="term" value="F:alpha-1,4-glucan glucosyltransferase (UDP-glucose donor) activity"/>
    <property type="evidence" value="ECO:0007669"/>
    <property type="project" value="InterPro"/>
</dbReference>
<dbReference type="GO" id="GO:0005978">
    <property type="term" value="P:glycogen biosynthetic process"/>
    <property type="evidence" value="ECO:0007669"/>
    <property type="project" value="UniProtKB-UniRule"/>
</dbReference>
<dbReference type="CDD" id="cd03791">
    <property type="entry name" value="GT5_Glycogen_synthase_DULL1-like"/>
    <property type="match status" value="1"/>
</dbReference>
<dbReference type="FunFam" id="3.40.50.2000:FF:000011">
    <property type="entry name" value="Glycogen synthase"/>
    <property type="match status" value="1"/>
</dbReference>
<dbReference type="Gene3D" id="3.40.50.2000">
    <property type="entry name" value="Glycogen Phosphorylase B"/>
    <property type="match status" value="2"/>
</dbReference>
<dbReference type="HAMAP" id="MF_00484">
    <property type="entry name" value="Glycogen_synth"/>
    <property type="match status" value="1"/>
</dbReference>
<dbReference type="InterPro" id="IPR001296">
    <property type="entry name" value="Glyco_trans_1"/>
</dbReference>
<dbReference type="InterPro" id="IPR011835">
    <property type="entry name" value="GS/SS"/>
</dbReference>
<dbReference type="InterPro" id="IPR013534">
    <property type="entry name" value="Starch_synth_cat_dom"/>
</dbReference>
<dbReference type="NCBIfam" id="TIGR02095">
    <property type="entry name" value="glgA"/>
    <property type="match status" value="1"/>
</dbReference>
<dbReference type="NCBIfam" id="NF001899">
    <property type="entry name" value="PRK00654.1-2"/>
    <property type="match status" value="1"/>
</dbReference>
<dbReference type="PANTHER" id="PTHR45825:SF11">
    <property type="entry name" value="ALPHA AMYLASE DOMAIN-CONTAINING PROTEIN"/>
    <property type="match status" value="1"/>
</dbReference>
<dbReference type="PANTHER" id="PTHR45825">
    <property type="entry name" value="GRANULE-BOUND STARCH SYNTHASE 1, CHLOROPLASTIC/AMYLOPLASTIC"/>
    <property type="match status" value="1"/>
</dbReference>
<dbReference type="Pfam" id="PF08323">
    <property type="entry name" value="Glyco_transf_5"/>
    <property type="match status" value="1"/>
</dbReference>
<dbReference type="Pfam" id="PF00534">
    <property type="entry name" value="Glycos_transf_1"/>
    <property type="match status" value="1"/>
</dbReference>
<dbReference type="SUPFAM" id="SSF53756">
    <property type="entry name" value="UDP-Glycosyltransferase/glycogen phosphorylase"/>
    <property type="match status" value="1"/>
</dbReference>
<accession>C6DH76</accession>
<evidence type="ECO:0000255" key="1">
    <source>
        <dbReference type="HAMAP-Rule" id="MF_00484"/>
    </source>
</evidence>
<keyword id="KW-0320">Glycogen biosynthesis</keyword>
<keyword id="KW-0328">Glycosyltransferase</keyword>
<keyword id="KW-0808">Transferase</keyword>
<protein>
    <recommendedName>
        <fullName evidence="1">Glycogen synthase</fullName>
        <ecNumber evidence="1">2.4.1.21</ecNumber>
    </recommendedName>
    <alternativeName>
        <fullName evidence="1">Starch [bacterial glycogen] synthase</fullName>
    </alternativeName>
</protein>
<reference key="1">
    <citation type="submission" date="2009-07" db="EMBL/GenBank/DDBJ databases">
        <title>Complete sequence of Pectobacterium carotovorum subsp. carotovorum PC1.</title>
        <authorList>
            <consortium name="US DOE Joint Genome Institute"/>
            <person name="Lucas S."/>
            <person name="Copeland A."/>
            <person name="Lapidus A."/>
            <person name="Glavina del Rio T."/>
            <person name="Tice H."/>
            <person name="Bruce D."/>
            <person name="Goodwin L."/>
            <person name="Pitluck S."/>
            <person name="Munk A.C."/>
            <person name="Brettin T."/>
            <person name="Detter J.C."/>
            <person name="Han C."/>
            <person name="Tapia R."/>
            <person name="Larimer F."/>
            <person name="Land M."/>
            <person name="Hauser L."/>
            <person name="Kyrpides N."/>
            <person name="Mikhailova N."/>
            <person name="Balakrishnan V."/>
            <person name="Glasner J."/>
            <person name="Perna N.T."/>
        </authorList>
    </citation>
    <scope>NUCLEOTIDE SEQUENCE [LARGE SCALE GENOMIC DNA]</scope>
    <source>
        <strain>PC1</strain>
    </source>
</reference>
<feature type="chain" id="PRO_1000206433" description="Glycogen synthase">
    <location>
        <begin position="1"/>
        <end position="479"/>
    </location>
</feature>
<feature type="binding site" evidence="1">
    <location>
        <position position="15"/>
    </location>
    <ligand>
        <name>ADP-alpha-D-glucose</name>
        <dbReference type="ChEBI" id="CHEBI:57498"/>
    </ligand>
</feature>
<organism>
    <name type="scientific">Pectobacterium carotovorum subsp. carotovorum (strain PC1)</name>
    <dbReference type="NCBI Taxonomy" id="561230"/>
    <lineage>
        <taxon>Bacteria</taxon>
        <taxon>Pseudomonadati</taxon>
        <taxon>Pseudomonadota</taxon>
        <taxon>Gammaproteobacteria</taxon>
        <taxon>Enterobacterales</taxon>
        <taxon>Pectobacteriaceae</taxon>
        <taxon>Pectobacterium</taxon>
    </lineage>
</organism>
<gene>
    <name evidence="1" type="primary">glgA</name>
    <name type="ordered locus">PC1_3934</name>
</gene>
<name>GLGA_PECCP</name>